<reference key="1">
    <citation type="journal article" date="2001" name="Proc. Natl. Acad. Sci. U.S.A.">
        <title>The complete genome of the crenarchaeon Sulfolobus solfataricus P2.</title>
        <authorList>
            <person name="She Q."/>
            <person name="Singh R.K."/>
            <person name="Confalonieri F."/>
            <person name="Zivanovic Y."/>
            <person name="Allard G."/>
            <person name="Awayez M.J."/>
            <person name="Chan-Weiher C.C.-Y."/>
            <person name="Clausen I.G."/>
            <person name="Curtis B.A."/>
            <person name="De Moors A."/>
            <person name="Erauso G."/>
            <person name="Fletcher C."/>
            <person name="Gordon P.M.K."/>
            <person name="Heikamp-de Jong I."/>
            <person name="Jeffries A.C."/>
            <person name="Kozera C.J."/>
            <person name="Medina N."/>
            <person name="Peng X."/>
            <person name="Thi-Ngoc H.P."/>
            <person name="Redder P."/>
            <person name="Schenk M.E."/>
            <person name="Theriault C."/>
            <person name="Tolstrup N."/>
            <person name="Charlebois R.L."/>
            <person name="Doolittle W.F."/>
            <person name="Duguet M."/>
            <person name="Gaasterland T."/>
            <person name="Garrett R.A."/>
            <person name="Ragan M.A."/>
            <person name="Sensen C.W."/>
            <person name="Van der Oost J."/>
        </authorList>
    </citation>
    <scope>NUCLEOTIDE SEQUENCE [LARGE SCALE GENOMIC DNA]</scope>
    <source>
        <strain>ATCC 35092 / DSM 1617 / JCM 11322 / P2</strain>
    </source>
</reference>
<keyword id="KW-0169">Cobalamin biosynthesis</keyword>
<keyword id="KW-0489">Methyltransferase</keyword>
<keyword id="KW-1185">Reference proteome</keyword>
<keyword id="KW-0949">S-adenosyl-L-methionine</keyword>
<keyword id="KW-0808">Transferase</keyword>
<gene>
    <name evidence="1" type="primary">cbiD</name>
    <name type="ordered locus">SSO2305</name>
</gene>
<organism>
    <name type="scientific">Saccharolobus solfataricus (strain ATCC 35092 / DSM 1617 / JCM 11322 / P2)</name>
    <name type="common">Sulfolobus solfataricus</name>
    <dbReference type="NCBI Taxonomy" id="273057"/>
    <lineage>
        <taxon>Archaea</taxon>
        <taxon>Thermoproteota</taxon>
        <taxon>Thermoprotei</taxon>
        <taxon>Sulfolobales</taxon>
        <taxon>Sulfolobaceae</taxon>
        <taxon>Saccharolobus</taxon>
    </lineage>
</organism>
<feature type="chain" id="PRO_0000141699" description="Cobalt-precorrin-5B C(1)-methyltransferase">
    <location>
        <begin position="1"/>
        <end position="349"/>
    </location>
</feature>
<name>CBID_SACS2</name>
<comment type="function">
    <text evidence="1">Catalyzes the methylation of C-1 in cobalt-precorrin-5B to form cobalt-precorrin-6A.</text>
</comment>
<comment type="catalytic activity">
    <reaction evidence="1">
        <text>Co-precorrin-5B + S-adenosyl-L-methionine = Co-precorrin-6A + S-adenosyl-L-homocysteine</text>
        <dbReference type="Rhea" id="RHEA:26285"/>
        <dbReference type="ChEBI" id="CHEBI:57856"/>
        <dbReference type="ChEBI" id="CHEBI:59789"/>
        <dbReference type="ChEBI" id="CHEBI:60063"/>
        <dbReference type="ChEBI" id="CHEBI:60064"/>
        <dbReference type="EC" id="2.1.1.195"/>
    </reaction>
</comment>
<comment type="pathway">
    <text evidence="1">Cofactor biosynthesis; adenosylcobalamin biosynthesis; cob(II)yrinate a,c-diamide from sirohydrochlorin (anaerobic route): step 6/10.</text>
</comment>
<comment type="similarity">
    <text evidence="1">Belongs to the CbiD family.</text>
</comment>
<evidence type="ECO:0000255" key="1">
    <source>
        <dbReference type="HAMAP-Rule" id="MF_00787"/>
    </source>
</evidence>
<sequence length="349" mass="37755">MIINSLKRFGITTGAAASAAAKAAVIGLLNKEKRSTVVIPTPIGLRLEIPVEKVEIDSEISCAEVKKFSGDNPDILDGLVIRCCAKLNENNEIVIIGERGVGKVTRSGLKATMGEMAISPTVREMIINAIREVTDKGIQITIEVPNGETIAEKTLNKMVGIVGGISILGTTGIETPVSDDDYLEHIRCELNVIRQSYDYVVIAPGNSAAKYAAELFDSNCIIKVGDRIGDSIKLASNLFKKVILAGLPAKLLKVYAGIFNTHYSQGDARLESLTHASVLAGLPYGTLTKISNALSVEEAFTYMTKEQRRKVMNIVAEKILSRIKSFNDNINFCVIIFDYDGESLSRVGC</sequence>
<protein>
    <recommendedName>
        <fullName evidence="1">Cobalt-precorrin-5B C(1)-methyltransferase</fullName>
        <ecNumber evidence="1">2.1.1.195</ecNumber>
    </recommendedName>
    <alternativeName>
        <fullName evidence="1">Cobalt-precorrin-6A synthase</fullName>
    </alternativeName>
</protein>
<proteinExistence type="inferred from homology"/>
<dbReference type="EC" id="2.1.1.195" evidence="1"/>
<dbReference type="EMBL" id="AE006641">
    <property type="protein sequence ID" value="AAK42462.1"/>
    <property type="molecule type" value="Genomic_DNA"/>
</dbReference>
<dbReference type="PIR" id="G90400">
    <property type="entry name" value="G90400"/>
</dbReference>
<dbReference type="RefSeq" id="WP_009991807.1">
    <property type="nucleotide sequence ID" value="NC_002754.1"/>
</dbReference>
<dbReference type="SMR" id="Q97WC6"/>
<dbReference type="FunCoup" id="Q97WC6">
    <property type="interactions" value="98"/>
</dbReference>
<dbReference type="STRING" id="273057.SSO2305"/>
<dbReference type="PaxDb" id="273057-SSO2305"/>
<dbReference type="EnsemblBacteria" id="AAK42462">
    <property type="protein sequence ID" value="AAK42462"/>
    <property type="gene ID" value="SSO2305"/>
</dbReference>
<dbReference type="GeneID" id="44128032"/>
<dbReference type="KEGG" id="sso:SSO2305"/>
<dbReference type="PATRIC" id="fig|273057.12.peg.2394"/>
<dbReference type="eggNOG" id="arCOG04383">
    <property type="taxonomic scope" value="Archaea"/>
</dbReference>
<dbReference type="HOGENOM" id="CLU_041273_1_0_2"/>
<dbReference type="InParanoid" id="Q97WC6"/>
<dbReference type="PhylomeDB" id="Q97WC6"/>
<dbReference type="UniPathway" id="UPA00148">
    <property type="reaction ID" value="UER00227"/>
</dbReference>
<dbReference type="Proteomes" id="UP000001974">
    <property type="component" value="Chromosome"/>
</dbReference>
<dbReference type="GO" id="GO:0043780">
    <property type="term" value="F:cobalt-precorrin-5B C1-methyltransferase activity"/>
    <property type="evidence" value="ECO:0007669"/>
    <property type="project" value="RHEA"/>
</dbReference>
<dbReference type="GO" id="GO:0019251">
    <property type="term" value="P:anaerobic cobalamin biosynthetic process"/>
    <property type="evidence" value="ECO:0007669"/>
    <property type="project" value="UniProtKB-UniRule"/>
</dbReference>
<dbReference type="GO" id="GO:0032259">
    <property type="term" value="P:methylation"/>
    <property type="evidence" value="ECO:0007669"/>
    <property type="project" value="UniProtKB-KW"/>
</dbReference>
<dbReference type="Gene3D" id="3.30.2110.10">
    <property type="entry name" value="CbiD-like"/>
    <property type="match status" value="1"/>
</dbReference>
<dbReference type="Gene3D" id="3.40.50.10720">
    <property type="entry name" value="CbiD-like domains"/>
    <property type="match status" value="1"/>
</dbReference>
<dbReference type="HAMAP" id="MF_00787">
    <property type="entry name" value="CbiD"/>
    <property type="match status" value="1"/>
</dbReference>
<dbReference type="InterPro" id="IPR002748">
    <property type="entry name" value="CbiD"/>
</dbReference>
<dbReference type="InterPro" id="IPR036074">
    <property type="entry name" value="CbiD_sf"/>
</dbReference>
<dbReference type="NCBIfam" id="TIGR00312">
    <property type="entry name" value="cbiD"/>
    <property type="match status" value="1"/>
</dbReference>
<dbReference type="PANTHER" id="PTHR35863">
    <property type="entry name" value="COBALT-PRECORRIN-5B C(1)-METHYLTRANSFERASE"/>
    <property type="match status" value="1"/>
</dbReference>
<dbReference type="PANTHER" id="PTHR35863:SF1">
    <property type="entry name" value="COBALT-PRECORRIN-5B C(1)-METHYLTRANSFERASE"/>
    <property type="match status" value="1"/>
</dbReference>
<dbReference type="Pfam" id="PF01888">
    <property type="entry name" value="CbiD"/>
    <property type="match status" value="1"/>
</dbReference>
<dbReference type="PIRSF" id="PIRSF026782">
    <property type="entry name" value="CbiD"/>
    <property type="match status" value="1"/>
</dbReference>
<dbReference type="SUPFAM" id="SSF111342">
    <property type="entry name" value="CbiD-like"/>
    <property type="match status" value="1"/>
</dbReference>
<accession>Q97WC6</accession>